<dbReference type="EC" id="2.5.1.141" evidence="1"/>
<dbReference type="EMBL" id="CP000655">
    <property type="protein sequence ID" value="ABP35143.1"/>
    <property type="molecule type" value="Genomic_DNA"/>
</dbReference>
<dbReference type="RefSeq" id="WP_011903766.1">
    <property type="nucleotide sequence ID" value="NC_009379.1"/>
</dbReference>
<dbReference type="SMR" id="A4T079"/>
<dbReference type="GeneID" id="31482322"/>
<dbReference type="KEGG" id="pnu:Pnuc_1931"/>
<dbReference type="eggNOG" id="COG0109">
    <property type="taxonomic scope" value="Bacteria"/>
</dbReference>
<dbReference type="HOGENOM" id="CLU_029631_0_2_4"/>
<dbReference type="UniPathway" id="UPA00834">
    <property type="reaction ID" value="UER00712"/>
</dbReference>
<dbReference type="Proteomes" id="UP000000231">
    <property type="component" value="Chromosome"/>
</dbReference>
<dbReference type="GO" id="GO:0005886">
    <property type="term" value="C:plasma membrane"/>
    <property type="evidence" value="ECO:0007669"/>
    <property type="project" value="UniProtKB-SubCell"/>
</dbReference>
<dbReference type="GO" id="GO:0008495">
    <property type="term" value="F:protoheme IX farnesyltransferase activity"/>
    <property type="evidence" value="ECO:0007669"/>
    <property type="project" value="UniProtKB-UniRule"/>
</dbReference>
<dbReference type="GO" id="GO:0048034">
    <property type="term" value="P:heme O biosynthetic process"/>
    <property type="evidence" value="ECO:0007669"/>
    <property type="project" value="UniProtKB-UniRule"/>
</dbReference>
<dbReference type="CDD" id="cd13957">
    <property type="entry name" value="PT_UbiA_Cox10"/>
    <property type="match status" value="1"/>
</dbReference>
<dbReference type="Gene3D" id="1.10.357.140">
    <property type="entry name" value="UbiA prenyltransferase"/>
    <property type="match status" value="1"/>
</dbReference>
<dbReference type="HAMAP" id="MF_00154">
    <property type="entry name" value="CyoE_CtaB"/>
    <property type="match status" value="1"/>
</dbReference>
<dbReference type="InterPro" id="IPR006369">
    <property type="entry name" value="Protohaem_IX_farnesylTrfase"/>
</dbReference>
<dbReference type="InterPro" id="IPR000537">
    <property type="entry name" value="UbiA_prenyltransferase"/>
</dbReference>
<dbReference type="InterPro" id="IPR044878">
    <property type="entry name" value="UbiA_sf"/>
</dbReference>
<dbReference type="NCBIfam" id="TIGR01473">
    <property type="entry name" value="cyoE_ctaB"/>
    <property type="match status" value="1"/>
</dbReference>
<dbReference type="NCBIfam" id="NF003349">
    <property type="entry name" value="PRK04375.1-2"/>
    <property type="match status" value="1"/>
</dbReference>
<dbReference type="PANTHER" id="PTHR43448:SF7">
    <property type="entry name" value="4-HYDROXYBENZOATE SOLANESYLTRANSFERASE"/>
    <property type="match status" value="1"/>
</dbReference>
<dbReference type="PANTHER" id="PTHR43448">
    <property type="entry name" value="PROTOHEME IX FARNESYLTRANSFERASE, MITOCHONDRIAL"/>
    <property type="match status" value="1"/>
</dbReference>
<dbReference type="Pfam" id="PF01040">
    <property type="entry name" value="UbiA"/>
    <property type="match status" value="1"/>
</dbReference>
<sequence length="297" mass="32856">MSTSNSSIPASMPRWRQYWVLTKPRVTQLAVFCAVIGMFLATPGMVPYPVLFGGIAGIWLLAGAAFAVNCLIEQAVDAKMKRTSWRPSATGEVTPFHIIIFSIILGSLGMIILWNFCNPLTMWLTLATFVGYAVIYTWLLKPATPQNIVIGGLSGAMPPALGWAAVTNGLSAEAWLLVLIIFVWTPPHFWALALYRRDDYVQSGLPMLPVTHGERFTLLNILLYTLILIAATLLPYIYGMSGIIYLISAIVLGLMFLAYVIALFVSYSDALAKKTFRFSITYLSLLFAALLIDHYFL</sequence>
<feature type="chain" id="PRO_0000346065" description="Protoheme IX farnesyltransferase">
    <location>
        <begin position="1"/>
        <end position="297"/>
    </location>
</feature>
<feature type="transmembrane region" description="Helical" evidence="1">
    <location>
        <begin position="26"/>
        <end position="46"/>
    </location>
</feature>
<feature type="transmembrane region" description="Helical" evidence="1">
    <location>
        <begin position="48"/>
        <end position="68"/>
    </location>
</feature>
<feature type="transmembrane region" description="Helical" evidence="1">
    <location>
        <begin position="96"/>
        <end position="116"/>
    </location>
</feature>
<feature type="transmembrane region" description="Helical" evidence="1">
    <location>
        <begin position="120"/>
        <end position="140"/>
    </location>
</feature>
<feature type="transmembrane region" description="Helical" evidence="1">
    <location>
        <begin position="147"/>
        <end position="167"/>
    </location>
</feature>
<feature type="transmembrane region" description="Helical" evidence="1">
    <location>
        <begin position="174"/>
        <end position="194"/>
    </location>
</feature>
<feature type="transmembrane region" description="Helical" evidence="1">
    <location>
        <begin position="218"/>
        <end position="238"/>
    </location>
</feature>
<feature type="transmembrane region" description="Helical" evidence="1">
    <location>
        <begin position="243"/>
        <end position="263"/>
    </location>
</feature>
<feature type="transmembrane region" description="Helical" evidence="1">
    <location>
        <begin position="276"/>
        <end position="296"/>
    </location>
</feature>
<evidence type="ECO:0000255" key="1">
    <source>
        <dbReference type="HAMAP-Rule" id="MF_00154"/>
    </source>
</evidence>
<comment type="function">
    <text evidence="1">Converts heme B (protoheme IX) to heme O by substitution of the vinyl group on carbon 2 of heme B porphyrin ring with a hydroxyethyl farnesyl side group.</text>
</comment>
<comment type="catalytic activity">
    <reaction evidence="1">
        <text>heme b + (2E,6E)-farnesyl diphosphate + H2O = Fe(II)-heme o + diphosphate</text>
        <dbReference type="Rhea" id="RHEA:28070"/>
        <dbReference type="ChEBI" id="CHEBI:15377"/>
        <dbReference type="ChEBI" id="CHEBI:33019"/>
        <dbReference type="ChEBI" id="CHEBI:60344"/>
        <dbReference type="ChEBI" id="CHEBI:60530"/>
        <dbReference type="ChEBI" id="CHEBI:175763"/>
        <dbReference type="EC" id="2.5.1.141"/>
    </reaction>
</comment>
<comment type="pathway">
    <text evidence="1">Porphyrin-containing compound metabolism; heme O biosynthesis; heme O from protoheme: step 1/1.</text>
</comment>
<comment type="subcellular location">
    <subcellularLocation>
        <location evidence="1">Cell membrane</location>
        <topology evidence="1">Multi-pass membrane protein</topology>
    </subcellularLocation>
</comment>
<comment type="miscellaneous">
    <text evidence="1">Carbon 2 of the heme B porphyrin ring is defined according to the Fischer nomenclature.</text>
</comment>
<comment type="similarity">
    <text evidence="1">Belongs to the UbiA prenyltransferase family. Protoheme IX farnesyltransferase subfamily.</text>
</comment>
<keyword id="KW-1003">Cell membrane</keyword>
<keyword id="KW-0350">Heme biosynthesis</keyword>
<keyword id="KW-0472">Membrane</keyword>
<keyword id="KW-1185">Reference proteome</keyword>
<keyword id="KW-0808">Transferase</keyword>
<keyword id="KW-0812">Transmembrane</keyword>
<keyword id="KW-1133">Transmembrane helix</keyword>
<name>COXX_POLAQ</name>
<accession>A4T079</accession>
<organism>
    <name type="scientific">Polynucleobacter asymbioticus (strain DSM 18221 / CIP 109841 / QLW-P1DMWA-1)</name>
    <name type="common">Polynucleobacter necessarius subsp. asymbioticus</name>
    <dbReference type="NCBI Taxonomy" id="312153"/>
    <lineage>
        <taxon>Bacteria</taxon>
        <taxon>Pseudomonadati</taxon>
        <taxon>Pseudomonadota</taxon>
        <taxon>Betaproteobacteria</taxon>
        <taxon>Burkholderiales</taxon>
        <taxon>Burkholderiaceae</taxon>
        <taxon>Polynucleobacter</taxon>
    </lineage>
</organism>
<reference key="1">
    <citation type="journal article" date="2012" name="Stand. Genomic Sci.">
        <title>Complete genome sequence of Polynucleobacter necessarius subsp. asymbioticus type strain (QLW-P1DMWA-1(T)).</title>
        <authorList>
            <person name="Meincke L."/>
            <person name="Copeland A."/>
            <person name="Lapidus A."/>
            <person name="Lucas S."/>
            <person name="Berry K.W."/>
            <person name="Del Rio T.G."/>
            <person name="Hammon N."/>
            <person name="Dalin E."/>
            <person name="Tice H."/>
            <person name="Pitluck S."/>
            <person name="Richardson P."/>
            <person name="Bruce D."/>
            <person name="Goodwin L."/>
            <person name="Han C."/>
            <person name="Tapia R."/>
            <person name="Detter J.C."/>
            <person name="Schmutz J."/>
            <person name="Brettin T."/>
            <person name="Larimer F."/>
            <person name="Land M."/>
            <person name="Hauser L."/>
            <person name="Kyrpides N.C."/>
            <person name="Ivanova N."/>
            <person name="Goker M."/>
            <person name="Woyke T."/>
            <person name="Wu Q.L."/>
            <person name="Pockl M."/>
            <person name="Hahn M.W."/>
            <person name="Klenk H.P."/>
        </authorList>
    </citation>
    <scope>NUCLEOTIDE SEQUENCE [LARGE SCALE GENOMIC DNA]</scope>
    <source>
        <strain>DSM 18221 / CIP 109841 / QLW-P1DMWA-1</strain>
    </source>
</reference>
<gene>
    <name evidence="1" type="primary">ctaB</name>
    <name type="ordered locus">Pnuc_1931</name>
</gene>
<proteinExistence type="inferred from homology"/>
<protein>
    <recommendedName>
        <fullName evidence="1">Protoheme IX farnesyltransferase</fullName>
        <ecNumber evidence="1">2.5.1.141</ecNumber>
    </recommendedName>
    <alternativeName>
        <fullName evidence="1">Heme B farnesyltransferase</fullName>
    </alternativeName>
    <alternativeName>
        <fullName evidence="1">Heme O synthase</fullName>
    </alternativeName>
</protein>